<dbReference type="EMBL" id="BC113273">
    <property type="protein sequence ID" value="AAI13274.1"/>
    <property type="molecule type" value="mRNA"/>
</dbReference>
<dbReference type="RefSeq" id="NP_001040039.1">
    <property type="nucleotide sequence ID" value="NM_001046574.1"/>
</dbReference>
<dbReference type="SMR" id="Q29S05"/>
<dbReference type="FunCoup" id="Q29S05">
    <property type="interactions" value="21"/>
</dbReference>
<dbReference type="STRING" id="9913.ENSBTAP00000001315"/>
<dbReference type="PaxDb" id="9913-ENSBTAP00000001315"/>
<dbReference type="GeneID" id="616069"/>
<dbReference type="KEGG" id="bta:616069"/>
<dbReference type="CTD" id="90634"/>
<dbReference type="VEuPathDB" id="HostDB:ENSBTAG00000000993"/>
<dbReference type="eggNOG" id="KOG2401">
    <property type="taxonomic scope" value="Eukaryota"/>
</dbReference>
<dbReference type="HOGENOM" id="CLU_083043_1_1_1"/>
<dbReference type="InParanoid" id="Q29S05"/>
<dbReference type="OrthoDB" id="3231855at2759"/>
<dbReference type="Proteomes" id="UP000009136">
    <property type="component" value="Chromosome 12"/>
</dbReference>
<dbReference type="Bgee" id="ENSBTAG00000000993">
    <property type="expression patterns" value="Expressed in subcutaneous adipose tissue and 106 other cell types or tissues"/>
</dbReference>
<dbReference type="Gene3D" id="3.40.50.300">
    <property type="entry name" value="P-loop containing nucleotide triphosphate hydrolases"/>
    <property type="match status" value="1"/>
</dbReference>
<dbReference type="InterPro" id="IPR026302">
    <property type="entry name" value="NEDD4-bd_p2"/>
</dbReference>
<dbReference type="InterPro" id="IPR027417">
    <property type="entry name" value="P-loop_NTPase"/>
</dbReference>
<dbReference type="PANTHER" id="PTHR13308">
    <property type="entry name" value="NEDD4-BINDING PROTEIN 2-LIKE 1"/>
    <property type="match status" value="1"/>
</dbReference>
<dbReference type="PANTHER" id="PTHR13308:SF5">
    <property type="entry name" value="NEDD4-BINDING PROTEIN 2-LIKE 1"/>
    <property type="match status" value="1"/>
</dbReference>
<dbReference type="Pfam" id="PF13671">
    <property type="entry name" value="AAA_33"/>
    <property type="match status" value="1"/>
</dbReference>
<dbReference type="SUPFAM" id="SSF52540">
    <property type="entry name" value="P-loop containing nucleoside triphosphate hydrolases"/>
    <property type="match status" value="1"/>
</dbReference>
<protein>
    <recommendedName>
        <fullName>NEDD4-binding protein 2-like 1</fullName>
    </recommendedName>
</protein>
<reference key="1">
    <citation type="submission" date="2006-02" db="EMBL/GenBank/DDBJ databases">
        <authorList>
            <consortium name="NIH - Mammalian Gene Collection (MGC) project"/>
        </authorList>
    </citation>
    <scope>NUCLEOTIDE SEQUENCE [LARGE SCALE MRNA]</scope>
    <source>
        <strain>Hereford</strain>
        <tissue>Uterus</tissue>
    </source>
</reference>
<organism>
    <name type="scientific">Bos taurus</name>
    <name type="common">Bovine</name>
    <dbReference type="NCBI Taxonomy" id="9913"/>
    <lineage>
        <taxon>Eukaryota</taxon>
        <taxon>Metazoa</taxon>
        <taxon>Chordata</taxon>
        <taxon>Craniata</taxon>
        <taxon>Vertebrata</taxon>
        <taxon>Euteleostomi</taxon>
        <taxon>Mammalia</taxon>
        <taxon>Eutheria</taxon>
        <taxon>Laurasiatheria</taxon>
        <taxon>Artiodactyla</taxon>
        <taxon>Ruminantia</taxon>
        <taxon>Pecora</taxon>
        <taxon>Bovidae</taxon>
        <taxon>Bovinae</taxon>
        <taxon>Bos</taxon>
    </lineage>
</organism>
<accession>Q29S05</accession>
<name>N42L1_BOVIN</name>
<gene>
    <name type="primary">N4BP2L1</name>
</gene>
<keyword id="KW-0217">Developmental protein</keyword>
<keyword id="KW-1185">Reference proteome</keyword>
<proteinExistence type="evidence at transcript level"/>
<comment type="function">
    <text evidence="1">Might play a role in adipocyte differentiation and triglyceride accumulation.</text>
</comment>
<comment type="subunit">
    <text evidence="1">Interacts with dynactin subunit proteins, including DCTN4, DCTN5 and DCTN5.</text>
</comment>
<comment type="induction">
    <text evidence="1">Up-regulated by USF1. Up-regulated by FOXO1.</text>
</comment>
<evidence type="ECO:0000250" key="1">
    <source>
        <dbReference type="UniProtKB" id="Q3V2Q8"/>
    </source>
</evidence>
<evidence type="ECO:0000256" key="2">
    <source>
        <dbReference type="SAM" id="MobiDB-lite"/>
    </source>
</evidence>
<feature type="chain" id="PRO_0000318957" description="NEDD4-binding protein 2-like 1">
    <location>
        <begin position="1"/>
        <end position="173"/>
    </location>
</feature>
<feature type="region of interest" description="Disordered" evidence="2">
    <location>
        <begin position="1"/>
        <end position="35"/>
    </location>
</feature>
<feature type="compositionally biased region" description="Pro residues" evidence="2">
    <location>
        <begin position="18"/>
        <end position="32"/>
    </location>
</feature>
<sequence length="173" mass="20472">MEESFLESFGRLSLRQQQPPPPRPPAPPPLRGTPPRRHSFRKHLYLLRGLPGSGKTTLARQLQHDFPRALIFSTDDFFFREDGAYEFNPDFLEEAHEWNQKRARKAMRNGISPIIIDNTNLHAWEMKPYAVMVFQTEQKNLFRLEMDMVVFRPEMKKHSWSPKRENTPNERTV</sequence>